<protein>
    <recommendedName>
        <fullName evidence="1">Recombination protein RecR</fullName>
    </recommendedName>
</protein>
<evidence type="ECO:0000255" key="1">
    <source>
        <dbReference type="HAMAP-Rule" id="MF_00017"/>
    </source>
</evidence>
<name>RECR_RICCK</name>
<sequence>MNETNDIDQLIYLFSKLPGLGSRSARRIVLYLLQDKDVRLKSLINNLINIDKKIVKCEICGNMDTENICRICSSEYRDKSVIAIVETVAELWAMERSGNFKGLYHVLGYNLSAASRKNPSMLRLPELLTRCFAANIKEVIIATNSTLEGQTTAYFITEYLKEHPAKISRLASGIPIGGELDYLDEGTLSAAINLRQPFE</sequence>
<organism>
    <name type="scientific">Rickettsia canadensis (strain McKiel)</name>
    <dbReference type="NCBI Taxonomy" id="293613"/>
    <lineage>
        <taxon>Bacteria</taxon>
        <taxon>Pseudomonadati</taxon>
        <taxon>Pseudomonadota</taxon>
        <taxon>Alphaproteobacteria</taxon>
        <taxon>Rickettsiales</taxon>
        <taxon>Rickettsiaceae</taxon>
        <taxon>Rickettsieae</taxon>
        <taxon>Rickettsia</taxon>
        <taxon>belli group</taxon>
    </lineage>
</organism>
<comment type="function">
    <text evidence="1">May play a role in DNA repair. It seems to be involved in an RecBC-independent recombinational process of DNA repair. It may act with RecF and RecO.</text>
</comment>
<comment type="similarity">
    <text evidence="1">Belongs to the RecR family.</text>
</comment>
<dbReference type="EMBL" id="CP000409">
    <property type="protein sequence ID" value="ABV73565.1"/>
    <property type="molecule type" value="Genomic_DNA"/>
</dbReference>
<dbReference type="RefSeq" id="WP_012148761.1">
    <property type="nucleotide sequence ID" value="NC_009879.1"/>
</dbReference>
<dbReference type="SMR" id="A8EYY2"/>
<dbReference type="STRING" id="293613.A1E_03150"/>
<dbReference type="KEGG" id="rcm:A1E_03150"/>
<dbReference type="eggNOG" id="COG0353">
    <property type="taxonomic scope" value="Bacteria"/>
</dbReference>
<dbReference type="HOGENOM" id="CLU_060739_1_1_5"/>
<dbReference type="Proteomes" id="UP000007056">
    <property type="component" value="Chromosome"/>
</dbReference>
<dbReference type="GO" id="GO:0003677">
    <property type="term" value="F:DNA binding"/>
    <property type="evidence" value="ECO:0007669"/>
    <property type="project" value="UniProtKB-UniRule"/>
</dbReference>
<dbReference type="GO" id="GO:0008270">
    <property type="term" value="F:zinc ion binding"/>
    <property type="evidence" value="ECO:0007669"/>
    <property type="project" value="UniProtKB-KW"/>
</dbReference>
<dbReference type="GO" id="GO:0006310">
    <property type="term" value="P:DNA recombination"/>
    <property type="evidence" value="ECO:0007669"/>
    <property type="project" value="UniProtKB-UniRule"/>
</dbReference>
<dbReference type="GO" id="GO:0006281">
    <property type="term" value="P:DNA repair"/>
    <property type="evidence" value="ECO:0007669"/>
    <property type="project" value="UniProtKB-UniRule"/>
</dbReference>
<dbReference type="CDD" id="cd01025">
    <property type="entry name" value="TOPRIM_recR"/>
    <property type="match status" value="1"/>
</dbReference>
<dbReference type="Gene3D" id="3.40.1360.10">
    <property type="match status" value="1"/>
</dbReference>
<dbReference type="Gene3D" id="1.10.8.420">
    <property type="entry name" value="RecR Domain 1"/>
    <property type="match status" value="1"/>
</dbReference>
<dbReference type="HAMAP" id="MF_00017">
    <property type="entry name" value="RecR"/>
    <property type="match status" value="1"/>
</dbReference>
<dbReference type="InterPro" id="IPR000093">
    <property type="entry name" value="DNA_Rcmb_RecR"/>
</dbReference>
<dbReference type="InterPro" id="IPR023627">
    <property type="entry name" value="Rcmb_RecR"/>
</dbReference>
<dbReference type="InterPro" id="IPR015967">
    <property type="entry name" value="Rcmb_RecR_Znf"/>
</dbReference>
<dbReference type="InterPro" id="IPR006171">
    <property type="entry name" value="TOPRIM_dom"/>
</dbReference>
<dbReference type="InterPro" id="IPR034137">
    <property type="entry name" value="TOPRIM_RecR"/>
</dbReference>
<dbReference type="NCBIfam" id="TIGR00615">
    <property type="entry name" value="recR"/>
    <property type="match status" value="1"/>
</dbReference>
<dbReference type="PANTHER" id="PTHR30446">
    <property type="entry name" value="RECOMBINATION PROTEIN RECR"/>
    <property type="match status" value="1"/>
</dbReference>
<dbReference type="PANTHER" id="PTHR30446:SF0">
    <property type="entry name" value="RECOMBINATION PROTEIN RECR"/>
    <property type="match status" value="1"/>
</dbReference>
<dbReference type="Pfam" id="PF21175">
    <property type="entry name" value="RecR_C"/>
    <property type="match status" value="1"/>
</dbReference>
<dbReference type="Pfam" id="PF21176">
    <property type="entry name" value="RecR_HhH"/>
    <property type="match status" value="1"/>
</dbReference>
<dbReference type="Pfam" id="PF02132">
    <property type="entry name" value="RecR_ZnF"/>
    <property type="match status" value="1"/>
</dbReference>
<dbReference type="Pfam" id="PF13662">
    <property type="entry name" value="Toprim_4"/>
    <property type="match status" value="1"/>
</dbReference>
<dbReference type="SMART" id="SM00493">
    <property type="entry name" value="TOPRIM"/>
    <property type="match status" value="1"/>
</dbReference>
<dbReference type="SUPFAM" id="SSF111304">
    <property type="entry name" value="Recombination protein RecR"/>
    <property type="match status" value="1"/>
</dbReference>
<dbReference type="PROSITE" id="PS01300">
    <property type="entry name" value="RECR"/>
    <property type="match status" value="1"/>
</dbReference>
<dbReference type="PROSITE" id="PS50880">
    <property type="entry name" value="TOPRIM"/>
    <property type="match status" value="1"/>
</dbReference>
<feature type="chain" id="PRO_0000322946" description="Recombination protein RecR">
    <location>
        <begin position="1"/>
        <end position="199"/>
    </location>
</feature>
<feature type="domain" description="Toprim" evidence="1">
    <location>
        <begin position="80"/>
        <end position="175"/>
    </location>
</feature>
<feature type="zinc finger region" description="C4-type" evidence="1">
    <location>
        <begin position="57"/>
        <end position="72"/>
    </location>
</feature>
<accession>A8EYY2</accession>
<reference key="1">
    <citation type="submission" date="2007-09" db="EMBL/GenBank/DDBJ databases">
        <title>Complete genome sequence of Rickettsia canadensis.</title>
        <authorList>
            <person name="Madan A."/>
            <person name="Fahey J."/>
            <person name="Helton E."/>
            <person name="Ketteman M."/>
            <person name="Madan A."/>
            <person name="Rodrigues S."/>
            <person name="Sanchez A."/>
            <person name="Whiting M."/>
            <person name="Dasch G."/>
            <person name="Eremeeva M."/>
        </authorList>
    </citation>
    <scope>NUCLEOTIDE SEQUENCE [LARGE SCALE GENOMIC DNA]</scope>
    <source>
        <strain>McKiel</strain>
    </source>
</reference>
<proteinExistence type="inferred from homology"/>
<keyword id="KW-0227">DNA damage</keyword>
<keyword id="KW-0233">DNA recombination</keyword>
<keyword id="KW-0234">DNA repair</keyword>
<keyword id="KW-0479">Metal-binding</keyword>
<keyword id="KW-0862">Zinc</keyword>
<keyword id="KW-0863">Zinc-finger</keyword>
<gene>
    <name evidence="1" type="primary">recR</name>
    <name type="ordered locus">A1E_03150</name>
</gene>